<organism>
    <name type="scientific">Brucella canis (strain ATCC 23365 / NCTC 10854 / RM-666)</name>
    <dbReference type="NCBI Taxonomy" id="483179"/>
    <lineage>
        <taxon>Bacteria</taxon>
        <taxon>Pseudomonadati</taxon>
        <taxon>Pseudomonadota</taxon>
        <taxon>Alphaproteobacteria</taxon>
        <taxon>Hyphomicrobiales</taxon>
        <taxon>Brucellaceae</taxon>
        <taxon>Brucella/Ochrobactrum group</taxon>
        <taxon>Brucella</taxon>
    </lineage>
</organism>
<dbReference type="EMBL" id="CP000872">
    <property type="protein sequence ID" value="ABX63189.1"/>
    <property type="molecule type" value="Genomic_DNA"/>
</dbReference>
<dbReference type="RefSeq" id="WP_004692056.1">
    <property type="nucleotide sequence ID" value="NC_010103.1"/>
</dbReference>
<dbReference type="SMR" id="A9M9Z4"/>
<dbReference type="GeneID" id="55591726"/>
<dbReference type="KEGG" id="bcs:BCAN_A2207"/>
<dbReference type="HOGENOM" id="CLU_006301_10_0_5"/>
<dbReference type="PhylomeDB" id="A9M9Z4"/>
<dbReference type="Proteomes" id="UP000001385">
    <property type="component" value="Chromosome I"/>
</dbReference>
<dbReference type="GO" id="GO:0005829">
    <property type="term" value="C:cytosol"/>
    <property type="evidence" value="ECO:0007669"/>
    <property type="project" value="TreeGrafter"/>
</dbReference>
<dbReference type="GO" id="GO:0005525">
    <property type="term" value="F:GTP binding"/>
    <property type="evidence" value="ECO:0007669"/>
    <property type="project" value="UniProtKB-KW"/>
</dbReference>
<dbReference type="GO" id="GO:0003924">
    <property type="term" value="F:GTPase activity"/>
    <property type="evidence" value="ECO:0007669"/>
    <property type="project" value="UniProtKB-UniRule"/>
</dbReference>
<dbReference type="GO" id="GO:0097216">
    <property type="term" value="F:guanosine tetraphosphate binding"/>
    <property type="evidence" value="ECO:0007669"/>
    <property type="project" value="UniProtKB-ARBA"/>
</dbReference>
<dbReference type="GO" id="GO:0003743">
    <property type="term" value="F:translation initiation factor activity"/>
    <property type="evidence" value="ECO:0007669"/>
    <property type="project" value="UniProtKB-UniRule"/>
</dbReference>
<dbReference type="CDD" id="cd01887">
    <property type="entry name" value="IF2_eIF5B"/>
    <property type="match status" value="1"/>
</dbReference>
<dbReference type="CDD" id="cd03702">
    <property type="entry name" value="IF2_mtIF2_II"/>
    <property type="match status" value="1"/>
</dbReference>
<dbReference type="CDD" id="cd03692">
    <property type="entry name" value="mtIF2_IVc"/>
    <property type="match status" value="1"/>
</dbReference>
<dbReference type="CDD" id="cd22265">
    <property type="entry name" value="UDM1_RNF168"/>
    <property type="match status" value="1"/>
</dbReference>
<dbReference type="FunFam" id="2.40.30.10:FF:000007">
    <property type="entry name" value="Translation initiation factor IF-2"/>
    <property type="match status" value="1"/>
</dbReference>
<dbReference type="FunFam" id="2.40.30.10:FF:000008">
    <property type="entry name" value="Translation initiation factor IF-2"/>
    <property type="match status" value="1"/>
</dbReference>
<dbReference type="FunFam" id="3.40.50.10050:FF:000001">
    <property type="entry name" value="Translation initiation factor IF-2"/>
    <property type="match status" value="1"/>
</dbReference>
<dbReference type="FunFam" id="3.40.50.300:FF:000019">
    <property type="entry name" value="Translation initiation factor IF-2"/>
    <property type="match status" value="1"/>
</dbReference>
<dbReference type="Gene3D" id="3.40.50.300">
    <property type="entry name" value="P-loop containing nucleotide triphosphate hydrolases"/>
    <property type="match status" value="1"/>
</dbReference>
<dbReference type="Gene3D" id="2.40.30.10">
    <property type="entry name" value="Translation factors"/>
    <property type="match status" value="2"/>
</dbReference>
<dbReference type="Gene3D" id="3.40.50.10050">
    <property type="entry name" value="Translation initiation factor IF- 2, domain 3"/>
    <property type="match status" value="1"/>
</dbReference>
<dbReference type="HAMAP" id="MF_00100_B">
    <property type="entry name" value="IF_2_B"/>
    <property type="match status" value="1"/>
</dbReference>
<dbReference type="InterPro" id="IPR053905">
    <property type="entry name" value="EF-G-like_DII"/>
</dbReference>
<dbReference type="InterPro" id="IPR004161">
    <property type="entry name" value="EFTu-like_2"/>
</dbReference>
<dbReference type="InterPro" id="IPR013575">
    <property type="entry name" value="IF2_assoc_dom_bac"/>
</dbReference>
<dbReference type="InterPro" id="IPR044145">
    <property type="entry name" value="IF2_II"/>
</dbReference>
<dbReference type="InterPro" id="IPR006847">
    <property type="entry name" value="IF2_N"/>
</dbReference>
<dbReference type="InterPro" id="IPR027417">
    <property type="entry name" value="P-loop_NTPase"/>
</dbReference>
<dbReference type="InterPro" id="IPR005225">
    <property type="entry name" value="Small_GTP-bd"/>
</dbReference>
<dbReference type="InterPro" id="IPR000795">
    <property type="entry name" value="T_Tr_GTP-bd_dom"/>
</dbReference>
<dbReference type="InterPro" id="IPR000178">
    <property type="entry name" value="TF_IF2_bacterial-like"/>
</dbReference>
<dbReference type="InterPro" id="IPR015760">
    <property type="entry name" value="TIF_IF2"/>
</dbReference>
<dbReference type="InterPro" id="IPR023115">
    <property type="entry name" value="TIF_IF2_dom3"/>
</dbReference>
<dbReference type="InterPro" id="IPR036925">
    <property type="entry name" value="TIF_IF2_dom3_sf"/>
</dbReference>
<dbReference type="InterPro" id="IPR009000">
    <property type="entry name" value="Transl_B-barrel_sf"/>
</dbReference>
<dbReference type="NCBIfam" id="TIGR00487">
    <property type="entry name" value="IF-2"/>
    <property type="match status" value="1"/>
</dbReference>
<dbReference type="NCBIfam" id="TIGR00231">
    <property type="entry name" value="small_GTP"/>
    <property type="match status" value="1"/>
</dbReference>
<dbReference type="PANTHER" id="PTHR43381:SF5">
    <property type="entry name" value="TR-TYPE G DOMAIN-CONTAINING PROTEIN"/>
    <property type="match status" value="1"/>
</dbReference>
<dbReference type="PANTHER" id="PTHR43381">
    <property type="entry name" value="TRANSLATION INITIATION FACTOR IF-2-RELATED"/>
    <property type="match status" value="1"/>
</dbReference>
<dbReference type="Pfam" id="PF22042">
    <property type="entry name" value="EF-G_D2"/>
    <property type="match status" value="1"/>
</dbReference>
<dbReference type="Pfam" id="PF00009">
    <property type="entry name" value="GTP_EFTU"/>
    <property type="match status" value="1"/>
</dbReference>
<dbReference type="Pfam" id="PF03144">
    <property type="entry name" value="GTP_EFTU_D2"/>
    <property type="match status" value="1"/>
</dbReference>
<dbReference type="Pfam" id="PF11987">
    <property type="entry name" value="IF-2"/>
    <property type="match status" value="1"/>
</dbReference>
<dbReference type="Pfam" id="PF08364">
    <property type="entry name" value="IF2_assoc"/>
    <property type="match status" value="1"/>
</dbReference>
<dbReference type="Pfam" id="PF04760">
    <property type="entry name" value="IF2_N"/>
    <property type="match status" value="1"/>
</dbReference>
<dbReference type="SUPFAM" id="SSF52156">
    <property type="entry name" value="Initiation factor IF2/eIF5b, domain 3"/>
    <property type="match status" value="1"/>
</dbReference>
<dbReference type="SUPFAM" id="SSF52540">
    <property type="entry name" value="P-loop containing nucleoside triphosphate hydrolases"/>
    <property type="match status" value="1"/>
</dbReference>
<dbReference type="SUPFAM" id="SSF50447">
    <property type="entry name" value="Translation proteins"/>
    <property type="match status" value="2"/>
</dbReference>
<dbReference type="PROSITE" id="PS51722">
    <property type="entry name" value="G_TR_2"/>
    <property type="match status" value="1"/>
</dbReference>
<dbReference type="PROSITE" id="PS01176">
    <property type="entry name" value="IF2"/>
    <property type="match status" value="1"/>
</dbReference>
<evidence type="ECO:0000250" key="1"/>
<evidence type="ECO:0000255" key="2">
    <source>
        <dbReference type="HAMAP-Rule" id="MF_00100"/>
    </source>
</evidence>
<evidence type="ECO:0000256" key="3">
    <source>
        <dbReference type="SAM" id="MobiDB-lite"/>
    </source>
</evidence>
<comment type="function">
    <text evidence="2">One of the essential components for the initiation of protein synthesis. Protects formylmethionyl-tRNA from spontaneous hydrolysis and promotes its binding to the 30S ribosomal subunits. Also involved in the hydrolysis of GTP during the formation of the 70S ribosomal complex.</text>
</comment>
<comment type="subcellular location">
    <subcellularLocation>
        <location evidence="2">Cytoplasm</location>
    </subcellularLocation>
</comment>
<comment type="similarity">
    <text evidence="2">Belongs to the TRAFAC class translation factor GTPase superfamily. Classic translation factor GTPase family. IF-2 subfamily.</text>
</comment>
<reference key="1">
    <citation type="submission" date="2007-10" db="EMBL/GenBank/DDBJ databases">
        <title>Brucella canis ATCC 23365 whole genome shotgun sequencing project.</title>
        <authorList>
            <person name="Setubal J.C."/>
            <person name="Bowns C."/>
            <person name="Boyle S."/>
            <person name="Crasta O.R."/>
            <person name="Czar M.J."/>
            <person name="Dharmanolla C."/>
            <person name="Gillespie J.J."/>
            <person name="Kenyon R.W."/>
            <person name="Lu J."/>
            <person name="Mane S."/>
            <person name="Mohapatra S."/>
            <person name="Nagrani S."/>
            <person name="Purkayastha A."/>
            <person name="Rajasimha H.K."/>
            <person name="Shallom J.M."/>
            <person name="Shallom S."/>
            <person name="Shukla M."/>
            <person name="Snyder E.E."/>
            <person name="Sobral B.W."/>
            <person name="Wattam A.R."/>
            <person name="Will R."/>
            <person name="Williams K."/>
            <person name="Yoo H."/>
            <person name="Bruce D."/>
            <person name="Detter C."/>
            <person name="Munk C."/>
            <person name="Brettin T.S."/>
        </authorList>
    </citation>
    <scope>NUCLEOTIDE SEQUENCE [LARGE SCALE GENOMIC DNA]</scope>
    <source>
        <strain>ATCC 23365 / NCTC 10854 / RM-666</strain>
    </source>
</reference>
<name>IF2_BRUC2</name>
<gene>
    <name evidence="2" type="primary">infB</name>
    <name type="ordered locus">BCAN_A2207</name>
</gene>
<feature type="chain" id="PRO_1000075594" description="Translation initiation factor IF-2">
    <location>
        <begin position="1"/>
        <end position="959"/>
    </location>
</feature>
<feature type="domain" description="tr-type G">
    <location>
        <begin position="457"/>
        <end position="626"/>
    </location>
</feature>
<feature type="region of interest" description="Disordered" evidence="3">
    <location>
        <begin position="1"/>
        <end position="374"/>
    </location>
</feature>
<feature type="region of interest" description="G1" evidence="1">
    <location>
        <begin position="466"/>
        <end position="473"/>
    </location>
</feature>
<feature type="region of interest" description="G2" evidence="1">
    <location>
        <begin position="491"/>
        <end position="495"/>
    </location>
</feature>
<feature type="region of interest" description="G3" evidence="1">
    <location>
        <begin position="512"/>
        <end position="515"/>
    </location>
</feature>
<feature type="region of interest" description="G4" evidence="1">
    <location>
        <begin position="566"/>
        <end position="569"/>
    </location>
</feature>
<feature type="region of interest" description="G5" evidence="1">
    <location>
        <begin position="602"/>
        <end position="604"/>
    </location>
</feature>
<feature type="compositionally biased region" description="Basic and acidic residues" evidence="3">
    <location>
        <begin position="1"/>
        <end position="10"/>
    </location>
</feature>
<feature type="compositionally biased region" description="Polar residues" evidence="3">
    <location>
        <begin position="27"/>
        <end position="37"/>
    </location>
</feature>
<feature type="compositionally biased region" description="Low complexity" evidence="3">
    <location>
        <begin position="63"/>
        <end position="118"/>
    </location>
</feature>
<feature type="compositionally biased region" description="Low complexity" evidence="3">
    <location>
        <begin position="128"/>
        <end position="138"/>
    </location>
</feature>
<feature type="compositionally biased region" description="Basic and acidic residues" evidence="3">
    <location>
        <begin position="154"/>
        <end position="225"/>
    </location>
</feature>
<feature type="compositionally biased region" description="Basic and acidic residues" evidence="3">
    <location>
        <begin position="232"/>
        <end position="241"/>
    </location>
</feature>
<feature type="compositionally biased region" description="Low complexity" evidence="3">
    <location>
        <begin position="246"/>
        <end position="284"/>
    </location>
</feature>
<feature type="compositionally biased region" description="Basic and acidic residues" evidence="3">
    <location>
        <begin position="318"/>
        <end position="333"/>
    </location>
</feature>
<feature type="binding site" evidence="2">
    <location>
        <begin position="466"/>
        <end position="473"/>
    </location>
    <ligand>
        <name>GTP</name>
        <dbReference type="ChEBI" id="CHEBI:37565"/>
    </ligand>
</feature>
<feature type="binding site" evidence="2">
    <location>
        <begin position="512"/>
        <end position="516"/>
    </location>
    <ligand>
        <name>GTP</name>
        <dbReference type="ChEBI" id="CHEBI:37565"/>
    </ligand>
</feature>
<feature type="binding site" evidence="2">
    <location>
        <begin position="566"/>
        <end position="569"/>
    </location>
    <ligand>
        <name>GTP</name>
        <dbReference type="ChEBI" id="CHEBI:37565"/>
    </ligand>
</feature>
<accession>A9M9Z4</accession>
<proteinExistence type="inferred from homology"/>
<keyword id="KW-0963">Cytoplasm</keyword>
<keyword id="KW-0342">GTP-binding</keyword>
<keyword id="KW-0396">Initiation factor</keyword>
<keyword id="KW-0547">Nucleotide-binding</keyword>
<keyword id="KW-0648">Protein biosynthesis</keyword>
<keyword id="KW-1185">Reference proteome</keyword>
<protein>
    <recommendedName>
        <fullName evidence="2">Translation initiation factor IF-2</fullName>
    </recommendedName>
</protein>
<sequence length="959" mass="104110">MSDKTNDDKTLSVNPKKTLTLKRPGVEQSTVRQNFSHGRTKAVVVETKKRKFSRPDEKPEVEAAAAPKPAAPAAAPQQAPASAPVSASAAQASAPQPAPVKAPATKAPAAPSAPVTKPHVAQQRPVHQRPGGQQAQRPRPADRSGMVLNTLSRSEMDARRRALEEAQIREVEERARAVEEAKRRAEEDARRAKEREESARRQAEEEARLKAEAEARRKAEEEAAKRMPQPEARSERRDDARPAPYGARPQQAGRPQGGRPQPAGRPQQGSPRPAPIIADAAPIAGKPLPQSQLRKPGQSDDDDDRRSGAARRGVAAKPEVRAPKVVKGEDDRRRGKLTLTSNLEEEGRSRSLSAMRRRQEKFKRSQMQETREKISREVTIPETITLQELAQRMAERSVDIIKYLMKQGQMMKPGDVIDADTAQLIAEEFGHTVKRVAESDVEEGIFDVADNESATVSRPPVVTIMGHVDHGKTSLLDAIRHANVVSGEAGGITQHIGAYQVVQNGQKITFIDTPGHAAFTAMRARGAQATDIAILVVAADDSVMPQTIESINHAKAAGVPIIVAINKIDKPAADPQKVRTALLQHEVFVESMGGEVLDVEVSAKNKINLDKLLDAVLLQAEMLDLKADPDRTAEGVVIEAQLDRGRGSVATVLIQKGTLHPGDILVAGSEWGRVRALVNDRGEHVKEAGPAMPVEILGLQGTPQAGDRFAVVANEAKAREIAEYRQRLARDKAVARQSGARGSLEQMMNQLQVSGTKEFPLVIKGDVQGSIEAITNALDKLGTDEVRARIVHSGAGGITESDVSLAEASNAAIIGFNVRANKQARNSAEQQGIEIRYYNIIYDLIDDVKAAMSGLLSPERRETFLGNAEILEVFNITKVGKVAGCRVTEGKVERGAGVRLIRDNVVIHEGKLKTLKRFKDEVAEVPSGQECGMAFENYDDIRAGDVIEAFRVEHVSRTL</sequence>